<accession>P87318</accession>
<organism>
    <name type="scientific">Schizosaccharomyces pombe (strain 972 / ATCC 24843)</name>
    <name type="common">Fission yeast</name>
    <dbReference type="NCBI Taxonomy" id="284812"/>
    <lineage>
        <taxon>Eukaryota</taxon>
        <taxon>Fungi</taxon>
        <taxon>Dikarya</taxon>
        <taxon>Ascomycota</taxon>
        <taxon>Taphrinomycotina</taxon>
        <taxon>Schizosaccharomycetes</taxon>
        <taxon>Schizosaccharomycetales</taxon>
        <taxon>Schizosaccharomycetaceae</taxon>
        <taxon>Schizosaccharomyces</taxon>
    </lineage>
</organism>
<gene>
    <name type="ORF">SPBC31F10.17c</name>
</gene>
<protein>
    <recommendedName>
        <fullName>Uncharacterized protein C31F10.17c</fullName>
    </recommendedName>
</protein>
<feature type="chain" id="PRO_0000116496" description="Uncharacterized protein C31F10.17c">
    <location>
        <begin position="1"/>
        <end position="135"/>
    </location>
</feature>
<name>YB2H_SCHPO</name>
<proteinExistence type="predicted"/>
<keyword id="KW-1185">Reference proteome</keyword>
<sequence>MTTTPLGKMIQDGDFVFQKAKKGTTIPKARKKTLTKDLQVQVAKELEQESSSTFRFAYVFPRKAQNHYYSPSRTHTSSIKKKRPKLCSNINLTPWSLIDSTSNKSIREQSREMGIISIQKWAEQARMRSLCFPKN</sequence>
<reference key="1">
    <citation type="journal article" date="2002" name="Nature">
        <title>The genome sequence of Schizosaccharomyces pombe.</title>
        <authorList>
            <person name="Wood V."/>
            <person name="Gwilliam R."/>
            <person name="Rajandream M.A."/>
            <person name="Lyne M.H."/>
            <person name="Lyne R."/>
            <person name="Stewart A."/>
            <person name="Sgouros J.G."/>
            <person name="Peat N."/>
            <person name="Hayles J."/>
            <person name="Baker S.G."/>
            <person name="Basham D."/>
            <person name="Bowman S."/>
            <person name="Brooks K."/>
            <person name="Brown D."/>
            <person name="Brown S."/>
            <person name="Chillingworth T."/>
            <person name="Churcher C.M."/>
            <person name="Collins M."/>
            <person name="Connor R."/>
            <person name="Cronin A."/>
            <person name="Davis P."/>
            <person name="Feltwell T."/>
            <person name="Fraser A."/>
            <person name="Gentles S."/>
            <person name="Goble A."/>
            <person name="Hamlin N."/>
            <person name="Harris D.E."/>
            <person name="Hidalgo J."/>
            <person name="Hodgson G."/>
            <person name="Holroyd S."/>
            <person name="Hornsby T."/>
            <person name="Howarth S."/>
            <person name="Huckle E.J."/>
            <person name="Hunt S."/>
            <person name="Jagels K."/>
            <person name="James K.D."/>
            <person name="Jones L."/>
            <person name="Jones M."/>
            <person name="Leather S."/>
            <person name="McDonald S."/>
            <person name="McLean J."/>
            <person name="Mooney P."/>
            <person name="Moule S."/>
            <person name="Mungall K.L."/>
            <person name="Murphy L.D."/>
            <person name="Niblett D."/>
            <person name="Odell C."/>
            <person name="Oliver K."/>
            <person name="O'Neil S."/>
            <person name="Pearson D."/>
            <person name="Quail M.A."/>
            <person name="Rabbinowitsch E."/>
            <person name="Rutherford K.M."/>
            <person name="Rutter S."/>
            <person name="Saunders D."/>
            <person name="Seeger K."/>
            <person name="Sharp S."/>
            <person name="Skelton J."/>
            <person name="Simmonds M.N."/>
            <person name="Squares R."/>
            <person name="Squares S."/>
            <person name="Stevens K."/>
            <person name="Taylor K."/>
            <person name="Taylor R.G."/>
            <person name="Tivey A."/>
            <person name="Walsh S.V."/>
            <person name="Warren T."/>
            <person name="Whitehead S."/>
            <person name="Woodward J.R."/>
            <person name="Volckaert G."/>
            <person name="Aert R."/>
            <person name="Robben J."/>
            <person name="Grymonprez B."/>
            <person name="Weltjens I."/>
            <person name="Vanstreels E."/>
            <person name="Rieger M."/>
            <person name="Schaefer M."/>
            <person name="Mueller-Auer S."/>
            <person name="Gabel C."/>
            <person name="Fuchs M."/>
            <person name="Duesterhoeft A."/>
            <person name="Fritzc C."/>
            <person name="Holzer E."/>
            <person name="Moestl D."/>
            <person name="Hilbert H."/>
            <person name="Borzym K."/>
            <person name="Langer I."/>
            <person name="Beck A."/>
            <person name="Lehrach H."/>
            <person name="Reinhardt R."/>
            <person name="Pohl T.M."/>
            <person name="Eger P."/>
            <person name="Zimmermann W."/>
            <person name="Wedler H."/>
            <person name="Wambutt R."/>
            <person name="Purnelle B."/>
            <person name="Goffeau A."/>
            <person name="Cadieu E."/>
            <person name="Dreano S."/>
            <person name="Gloux S."/>
            <person name="Lelaure V."/>
            <person name="Mottier S."/>
            <person name="Galibert F."/>
            <person name="Aves S.J."/>
            <person name="Xiang Z."/>
            <person name="Hunt C."/>
            <person name="Moore K."/>
            <person name="Hurst S.M."/>
            <person name="Lucas M."/>
            <person name="Rochet M."/>
            <person name="Gaillardin C."/>
            <person name="Tallada V.A."/>
            <person name="Garzon A."/>
            <person name="Thode G."/>
            <person name="Daga R.R."/>
            <person name="Cruzado L."/>
            <person name="Jimenez J."/>
            <person name="Sanchez M."/>
            <person name="del Rey F."/>
            <person name="Benito J."/>
            <person name="Dominguez A."/>
            <person name="Revuelta J.L."/>
            <person name="Moreno S."/>
            <person name="Armstrong J."/>
            <person name="Forsburg S.L."/>
            <person name="Cerutti L."/>
            <person name="Lowe T."/>
            <person name="McCombie W.R."/>
            <person name="Paulsen I."/>
            <person name="Potashkin J."/>
            <person name="Shpakovski G.V."/>
            <person name="Ussery D."/>
            <person name="Barrell B.G."/>
            <person name="Nurse P."/>
        </authorList>
    </citation>
    <scope>NUCLEOTIDE SEQUENCE [LARGE SCALE GENOMIC DNA]</scope>
    <source>
        <strain>972 / ATCC 24843</strain>
    </source>
</reference>
<dbReference type="EMBL" id="CU329671">
    <property type="protein sequence ID" value="CAB10093.1"/>
    <property type="molecule type" value="Genomic_DNA"/>
</dbReference>
<dbReference type="PIR" id="T40220">
    <property type="entry name" value="T40220"/>
</dbReference>
<dbReference type="RefSeq" id="NP_596579.1">
    <property type="nucleotide sequence ID" value="NM_001022500.2"/>
</dbReference>
<dbReference type="BioGRID" id="276777">
    <property type="interactions" value="8"/>
</dbReference>
<dbReference type="STRING" id="284812.P87318"/>
<dbReference type="iPTMnet" id="P87318"/>
<dbReference type="PaxDb" id="4896-SPBC31F10.17c.1"/>
<dbReference type="EnsemblFungi" id="SPBC31F10.17c.1">
    <property type="protein sequence ID" value="SPBC31F10.17c.1:pep"/>
    <property type="gene ID" value="SPBC31F10.17c"/>
</dbReference>
<dbReference type="KEGG" id="spo:2540245"/>
<dbReference type="PomBase" id="SPBC31F10.17c"/>
<dbReference type="VEuPathDB" id="FungiDB:SPBC31F10.17c"/>
<dbReference type="HOGENOM" id="CLU_1886948_0_0_1"/>
<dbReference type="InParanoid" id="P87318"/>
<dbReference type="PRO" id="PR:P87318"/>
<dbReference type="Proteomes" id="UP000002485">
    <property type="component" value="Chromosome II"/>
</dbReference>
<dbReference type="GO" id="GO:0072686">
    <property type="term" value="C:mitotic spindle"/>
    <property type="evidence" value="ECO:0007005"/>
    <property type="project" value="PomBase"/>
</dbReference>
<dbReference type="GO" id="GO:0005634">
    <property type="term" value="C:nucleus"/>
    <property type="evidence" value="ECO:0007005"/>
    <property type="project" value="PomBase"/>
</dbReference>